<comment type="function">
    <text evidence="1">Methylates ribosomal protein L11.</text>
</comment>
<comment type="catalytic activity">
    <reaction evidence="1">
        <text>L-lysyl-[protein] + 3 S-adenosyl-L-methionine = N(6),N(6),N(6)-trimethyl-L-lysyl-[protein] + 3 S-adenosyl-L-homocysteine + 3 H(+)</text>
        <dbReference type="Rhea" id="RHEA:54192"/>
        <dbReference type="Rhea" id="RHEA-COMP:9752"/>
        <dbReference type="Rhea" id="RHEA-COMP:13826"/>
        <dbReference type="ChEBI" id="CHEBI:15378"/>
        <dbReference type="ChEBI" id="CHEBI:29969"/>
        <dbReference type="ChEBI" id="CHEBI:57856"/>
        <dbReference type="ChEBI" id="CHEBI:59789"/>
        <dbReference type="ChEBI" id="CHEBI:61961"/>
    </reaction>
</comment>
<comment type="subcellular location">
    <subcellularLocation>
        <location evidence="1">Cytoplasm</location>
    </subcellularLocation>
</comment>
<comment type="similarity">
    <text evidence="1">Belongs to the methyltransferase superfamily. PrmA family.</text>
</comment>
<keyword id="KW-0963">Cytoplasm</keyword>
<keyword id="KW-0489">Methyltransferase</keyword>
<keyword id="KW-1185">Reference proteome</keyword>
<keyword id="KW-0949">S-adenosyl-L-methionine</keyword>
<keyword id="KW-0808">Transferase</keyword>
<proteinExistence type="inferred from homology"/>
<reference key="1">
    <citation type="journal article" date="2006" name="Nat. Biotechnol.">
        <title>The genome and transcriptomes of the anti-tumor agent Clostridium novyi-NT.</title>
        <authorList>
            <person name="Bettegowda C."/>
            <person name="Huang X."/>
            <person name="Lin J."/>
            <person name="Cheong I."/>
            <person name="Kohli M."/>
            <person name="Szabo S.A."/>
            <person name="Zhang X."/>
            <person name="Diaz L.A. Jr."/>
            <person name="Velculescu V.E."/>
            <person name="Parmigiani G."/>
            <person name="Kinzler K.W."/>
            <person name="Vogelstein B."/>
            <person name="Zhou S."/>
        </authorList>
    </citation>
    <scope>NUCLEOTIDE SEQUENCE [LARGE SCALE GENOMIC DNA]</scope>
    <source>
        <strain>NT</strain>
    </source>
</reference>
<feature type="chain" id="PRO_1000046012" description="Ribosomal protein L11 methyltransferase">
    <location>
        <begin position="1"/>
        <end position="312"/>
    </location>
</feature>
<feature type="binding site" evidence="1">
    <location>
        <position position="164"/>
    </location>
    <ligand>
        <name>S-adenosyl-L-methionine</name>
        <dbReference type="ChEBI" id="CHEBI:59789"/>
    </ligand>
</feature>
<feature type="binding site" evidence="1">
    <location>
        <position position="185"/>
    </location>
    <ligand>
        <name>S-adenosyl-L-methionine</name>
        <dbReference type="ChEBI" id="CHEBI:59789"/>
    </ligand>
</feature>
<feature type="binding site" evidence="1">
    <location>
        <position position="207"/>
    </location>
    <ligand>
        <name>S-adenosyl-L-methionine</name>
        <dbReference type="ChEBI" id="CHEBI:59789"/>
    </ligand>
</feature>
<feature type="binding site" evidence="1">
    <location>
        <position position="249"/>
    </location>
    <ligand>
        <name>S-adenosyl-L-methionine</name>
        <dbReference type="ChEBI" id="CHEBI:59789"/>
    </ligand>
</feature>
<name>PRMA_CLONN</name>
<protein>
    <recommendedName>
        <fullName evidence="1">Ribosomal protein L11 methyltransferase</fullName>
        <shortName evidence="1">L11 Mtase</shortName>
        <ecNumber evidence="1">2.1.1.-</ecNumber>
    </recommendedName>
</protein>
<sequence length="312" mass="35014">MDKEWIEVEILTSSEAAEAVTGILYNTGVKGVSIEDSKDIEEREQSEDNLFDWVELEELNVREGATIKAYYKDDENFEHYFQYIKDSVLNLDRFGLDKGEGKVTAKKVDEQDWANNWKKYYKPTKIGNEIVVKPTWEDYNKKDNEIVIELDPGMAFGTGTHETTRLCVKALEEYVNEDSVVFDIGTGSGILSIAAAKLNAKHVVGVDLDPVAVDAAKENVELNNLDNIEILYGNLMEVVDGKANIVVANILADIIKILAEDVKKFVVEGGYFISSGIILDRKDDVIEKLQQCGFEIEKINVDGEWCCIIARA</sequence>
<accession>A0Q1R2</accession>
<gene>
    <name evidence="1" type="primary">prmA</name>
    <name type="ordered locus">NT01CX_0055</name>
</gene>
<organism>
    <name type="scientific">Clostridium novyi (strain NT)</name>
    <dbReference type="NCBI Taxonomy" id="386415"/>
    <lineage>
        <taxon>Bacteria</taxon>
        <taxon>Bacillati</taxon>
        <taxon>Bacillota</taxon>
        <taxon>Clostridia</taxon>
        <taxon>Eubacteriales</taxon>
        <taxon>Clostridiaceae</taxon>
        <taxon>Clostridium</taxon>
    </lineage>
</organism>
<dbReference type="EC" id="2.1.1.-" evidence="1"/>
<dbReference type="EMBL" id="CP000382">
    <property type="protein sequence ID" value="ABK62255.1"/>
    <property type="molecule type" value="Genomic_DNA"/>
</dbReference>
<dbReference type="RefSeq" id="WP_011722556.1">
    <property type="nucleotide sequence ID" value="NC_008593.1"/>
</dbReference>
<dbReference type="SMR" id="A0Q1R2"/>
<dbReference type="STRING" id="386415.NT01CX_0055"/>
<dbReference type="KEGG" id="cno:NT01CX_0055"/>
<dbReference type="eggNOG" id="COG2264">
    <property type="taxonomic scope" value="Bacteria"/>
</dbReference>
<dbReference type="HOGENOM" id="CLU_049382_0_1_9"/>
<dbReference type="Proteomes" id="UP000008220">
    <property type="component" value="Chromosome"/>
</dbReference>
<dbReference type="GO" id="GO:0005737">
    <property type="term" value="C:cytoplasm"/>
    <property type="evidence" value="ECO:0007669"/>
    <property type="project" value="UniProtKB-SubCell"/>
</dbReference>
<dbReference type="GO" id="GO:0016279">
    <property type="term" value="F:protein-lysine N-methyltransferase activity"/>
    <property type="evidence" value="ECO:0007669"/>
    <property type="project" value="RHEA"/>
</dbReference>
<dbReference type="GO" id="GO:0032259">
    <property type="term" value="P:methylation"/>
    <property type="evidence" value="ECO:0007669"/>
    <property type="project" value="UniProtKB-KW"/>
</dbReference>
<dbReference type="CDD" id="cd02440">
    <property type="entry name" value="AdoMet_MTases"/>
    <property type="match status" value="1"/>
</dbReference>
<dbReference type="Gene3D" id="3.40.50.150">
    <property type="entry name" value="Vaccinia Virus protein VP39"/>
    <property type="match status" value="1"/>
</dbReference>
<dbReference type="HAMAP" id="MF_00735">
    <property type="entry name" value="Methyltr_PrmA"/>
    <property type="match status" value="1"/>
</dbReference>
<dbReference type="InterPro" id="IPR050078">
    <property type="entry name" value="Ribosomal_L11_MeTrfase_PrmA"/>
</dbReference>
<dbReference type="InterPro" id="IPR004498">
    <property type="entry name" value="Ribosomal_PrmA_MeTrfase"/>
</dbReference>
<dbReference type="InterPro" id="IPR029063">
    <property type="entry name" value="SAM-dependent_MTases_sf"/>
</dbReference>
<dbReference type="NCBIfam" id="TIGR00406">
    <property type="entry name" value="prmA"/>
    <property type="match status" value="1"/>
</dbReference>
<dbReference type="PANTHER" id="PTHR43648">
    <property type="entry name" value="ELECTRON TRANSFER FLAVOPROTEIN BETA SUBUNIT LYSINE METHYLTRANSFERASE"/>
    <property type="match status" value="1"/>
</dbReference>
<dbReference type="PANTHER" id="PTHR43648:SF1">
    <property type="entry name" value="ELECTRON TRANSFER FLAVOPROTEIN BETA SUBUNIT LYSINE METHYLTRANSFERASE"/>
    <property type="match status" value="1"/>
</dbReference>
<dbReference type="Pfam" id="PF06325">
    <property type="entry name" value="PrmA"/>
    <property type="match status" value="1"/>
</dbReference>
<dbReference type="PIRSF" id="PIRSF000401">
    <property type="entry name" value="RPL11_MTase"/>
    <property type="match status" value="1"/>
</dbReference>
<dbReference type="SUPFAM" id="SSF53335">
    <property type="entry name" value="S-adenosyl-L-methionine-dependent methyltransferases"/>
    <property type="match status" value="1"/>
</dbReference>
<evidence type="ECO:0000255" key="1">
    <source>
        <dbReference type="HAMAP-Rule" id="MF_00735"/>
    </source>
</evidence>